<accession>A8JAN3</accession>
<keyword id="KW-0963">Cytoplasm</keyword>
<keyword id="KW-0206">Cytoskeleton</keyword>
<keyword id="KW-1185">Reference proteome</keyword>
<keyword id="KW-0677">Repeat</keyword>
<keyword id="KW-0853">WD repeat</keyword>
<name>POC16_CHLRE</name>
<organism>
    <name type="scientific">Chlamydomonas reinhardtii</name>
    <name type="common">Chlamydomonas smithii</name>
    <dbReference type="NCBI Taxonomy" id="3055"/>
    <lineage>
        <taxon>Eukaryota</taxon>
        <taxon>Viridiplantae</taxon>
        <taxon>Chlorophyta</taxon>
        <taxon>core chlorophytes</taxon>
        <taxon>Chlorophyceae</taxon>
        <taxon>CS clade</taxon>
        <taxon>Chlamydomonadales</taxon>
        <taxon>Chlamydomonadaceae</taxon>
        <taxon>Chlamydomonas</taxon>
    </lineage>
</organism>
<protein>
    <recommendedName>
        <fullName evidence="4">Centriole proteome protein 16</fullName>
    </recommendedName>
</protein>
<gene>
    <name evidence="4" type="primary">POC16</name>
    <name evidence="5" type="ORF">CHLRE_14g613400v5</name>
    <name type="ORF">CHLREDRAFT_18900</name>
</gene>
<dbReference type="EMBL" id="DS496150">
    <property type="protein sequence ID" value="EDO99093.1"/>
    <property type="molecule type" value="Genomic_DNA"/>
</dbReference>
<dbReference type="EMBL" id="CM008975">
    <property type="protein sequence ID" value="PNW72962.1"/>
    <property type="molecule type" value="Genomic_DNA"/>
</dbReference>
<dbReference type="RefSeq" id="XP_001699039.1">
    <property type="nucleotide sequence ID" value="XM_001698987.1"/>
</dbReference>
<dbReference type="STRING" id="3055.A8JAN3"/>
<dbReference type="PaxDb" id="3055-EDO99093"/>
<dbReference type="EnsemblPlants" id="PNW72962">
    <property type="protein sequence ID" value="PNW72962"/>
    <property type="gene ID" value="CHLRE_14g613400v5"/>
</dbReference>
<dbReference type="GeneID" id="5724591"/>
<dbReference type="Gramene" id="PNW72962">
    <property type="protein sequence ID" value="PNW72962"/>
    <property type="gene ID" value="CHLRE_14g613400v5"/>
</dbReference>
<dbReference type="KEGG" id="cre:CHLRE_14g613400v5"/>
<dbReference type="eggNOG" id="KOG0266">
    <property type="taxonomic scope" value="Eukaryota"/>
</dbReference>
<dbReference type="eggNOG" id="KOG3213">
    <property type="taxonomic scope" value="Eukaryota"/>
</dbReference>
<dbReference type="HOGENOM" id="CLU_002454_0_0_1"/>
<dbReference type="InParanoid" id="A8JAN3"/>
<dbReference type="OMA" id="DHYVHIR"/>
<dbReference type="OrthoDB" id="6252103at2759"/>
<dbReference type="Proteomes" id="UP000006906">
    <property type="component" value="Chromosome 14"/>
</dbReference>
<dbReference type="GO" id="GO:0005814">
    <property type="term" value="C:centriole"/>
    <property type="evidence" value="ECO:0007669"/>
    <property type="project" value="UniProtKB-SubCell"/>
</dbReference>
<dbReference type="GO" id="GO:0005737">
    <property type="term" value="C:cytoplasm"/>
    <property type="evidence" value="ECO:0007669"/>
    <property type="project" value="UniProtKB-KW"/>
</dbReference>
<dbReference type="FunFam" id="2.130.10.10:FF:003525">
    <property type="entry name" value="WD repeat domain 90"/>
    <property type="match status" value="1"/>
</dbReference>
<dbReference type="Gene3D" id="2.130.10.10">
    <property type="entry name" value="YVTN repeat-like/Quinoprotein amine dehydrogenase"/>
    <property type="match status" value="6"/>
</dbReference>
<dbReference type="InterPro" id="IPR055441">
    <property type="entry name" value="Beta-prop_WDR90_POC16_2nd"/>
</dbReference>
<dbReference type="InterPro" id="IPR007714">
    <property type="entry name" value="CFA20_dom"/>
</dbReference>
<dbReference type="InterPro" id="IPR011047">
    <property type="entry name" value="Quinoprotein_ADH-like_sf"/>
</dbReference>
<dbReference type="InterPro" id="IPR015943">
    <property type="entry name" value="WD40/YVTN_repeat-like_dom_sf"/>
</dbReference>
<dbReference type="InterPro" id="IPR036322">
    <property type="entry name" value="WD40_repeat_dom_sf"/>
</dbReference>
<dbReference type="InterPro" id="IPR001680">
    <property type="entry name" value="WD40_rpt"/>
</dbReference>
<dbReference type="InterPro" id="IPR050630">
    <property type="entry name" value="WD_repeat_EMAP"/>
</dbReference>
<dbReference type="PANTHER" id="PTHR13720:SF33">
    <property type="entry name" value="HELP DOMAIN-CONTAINING PROTEIN"/>
    <property type="match status" value="1"/>
</dbReference>
<dbReference type="PANTHER" id="PTHR13720">
    <property type="entry name" value="WD-40 REPEAT PROTEIN"/>
    <property type="match status" value="1"/>
</dbReference>
<dbReference type="Pfam" id="PF23393">
    <property type="entry name" value="Beta-prop_WDR90_POC16_2nd"/>
    <property type="match status" value="1"/>
</dbReference>
<dbReference type="Pfam" id="PF05018">
    <property type="entry name" value="CFA20_dom"/>
    <property type="match status" value="1"/>
</dbReference>
<dbReference type="Pfam" id="PF00400">
    <property type="entry name" value="WD40"/>
    <property type="match status" value="3"/>
</dbReference>
<dbReference type="SMART" id="SM00320">
    <property type="entry name" value="WD40"/>
    <property type="match status" value="16"/>
</dbReference>
<dbReference type="SUPFAM" id="SSF50998">
    <property type="entry name" value="Quinoprotein alcohol dehydrogenase-like"/>
    <property type="match status" value="2"/>
</dbReference>
<dbReference type="SUPFAM" id="SSF50978">
    <property type="entry name" value="WD40 repeat-like"/>
    <property type="match status" value="2"/>
</dbReference>
<dbReference type="PROSITE" id="PS50082">
    <property type="entry name" value="WD_REPEATS_2"/>
    <property type="match status" value="3"/>
</dbReference>
<dbReference type="PROSITE" id="PS50294">
    <property type="entry name" value="WD_REPEATS_REGION"/>
    <property type="match status" value="2"/>
</dbReference>
<proteinExistence type="evidence at protein level"/>
<feature type="chain" id="PRO_0000445432" description="Centriole proteome protein 16">
    <location>
        <begin position="1"/>
        <end position="2083"/>
    </location>
</feature>
<feature type="repeat" description="WD 1" evidence="1">
    <location>
        <begin position="482"/>
        <end position="523"/>
    </location>
</feature>
<feature type="repeat" description="WD 2" evidence="1">
    <location>
        <begin position="526"/>
        <end position="569"/>
    </location>
</feature>
<feature type="repeat" description="WD 3" evidence="1">
    <location>
        <begin position="579"/>
        <end position="620"/>
    </location>
</feature>
<feature type="repeat" description="WD 4" evidence="1">
    <location>
        <begin position="689"/>
        <end position="726"/>
    </location>
</feature>
<feature type="repeat" description="WD 5" evidence="1">
    <location>
        <begin position="728"/>
        <end position="767"/>
    </location>
</feature>
<feature type="repeat" description="WD 6" evidence="1">
    <location>
        <begin position="770"/>
        <end position="809"/>
    </location>
</feature>
<feature type="repeat" description="WD 7" evidence="1">
    <location>
        <begin position="812"/>
        <end position="853"/>
    </location>
</feature>
<feature type="repeat" description="WD 8" evidence="1">
    <location>
        <begin position="856"/>
        <end position="895"/>
    </location>
</feature>
<feature type="repeat" description="WD 9" evidence="1">
    <location>
        <begin position="990"/>
        <end position="1029"/>
    </location>
</feature>
<feature type="repeat" description="WD 10" evidence="1">
    <location>
        <begin position="1041"/>
        <end position="1079"/>
    </location>
</feature>
<feature type="repeat" description="WD 11" evidence="1">
    <location>
        <begin position="1326"/>
        <end position="1365"/>
    </location>
</feature>
<feature type="repeat" description="WD 12" evidence="1">
    <location>
        <begin position="1403"/>
        <end position="1444"/>
    </location>
</feature>
<feature type="repeat" description="WD 13" evidence="1">
    <location>
        <begin position="1448"/>
        <end position="1486"/>
    </location>
</feature>
<feature type="repeat" description="WD 14" evidence="1">
    <location>
        <begin position="1497"/>
        <end position="1539"/>
    </location>
</feature>
<feature type="repeat" description="WD 15" evidence="1">
    <location>
        <begin position="1651"/>
        <end position="1691"/>
    </location>
</feature>
<feature type="repeat" description="WD 16" evidence="1">
    <location>
        <begin position="1736"/>
        <end position="1781"/>
    </location>
</feature>
<feature type="repeat" description="WD 17" evidence="1">
    <location>
        <begin position="1785"/>
        <end position="1824"/>
    </location>
</feature>
<feature type="repeat" description="WD 18" evidence="1">
    <location>
        <begin position="2035"/>
        <end position="2073"/>
    </location>
</feature>
<feature type="region of interest" description="Disordered" evidence="2">
    <location>
        <begin position="205"/>
        <end position="333"/>
    </location>
</feature>
<feature type="region of interest" description="Disordered" evidence="2">
    <location>
        <begin position="1113"/>
        <end position="1141"/>
    </location>
</feature>
<feature type="region of interest" description="Disordered" evidence="2">
    <location>
        <begin position="1225"/>
        <end position="1276"/>
    </location>
</feature>
<feature type="region of interest" description="Disordered" evidence="2">
    <location>
        <begin position="1713"/>
        <end position="1743"/>
    </location>
</feature>
<feature type="region of interest" description="Disordered" evidence="2">
    <location>
        <begin position="1832"/>
        <end position="1870"/>
    </location>
</feature>
<feature type="compositionally biased region" description="Low complexity" evidence="2">
    <location>
        <begin position="227"/>
        <end position="245"/>
    </location>
</feature>
<feature type="compositionally biased region" description="Gly residues" evidence="2">
    <location>
        <begin position="246"/>
        <end position="258"/>
    </location>
</feature>
<feature type="compositionally biased region" description="Low complexity" evidence="2">
    <location>
        <begin position="259"/>
        <end position="274"/>
    </location>
</feature>
<feature type="compositionally biased region" description="Low complexity" evidence="2">
    <location>
        <begin position="283"/>
        <end position="292"/>
    </location>
</feature>
<feature type="compositionally biased region" description="Acidic residues" evidence="2">
    <location>
        <begin position="302"/>
        <end position="315"/>
    </location>
</feature>
<feature type="compositionally biased region" description="Pro residues" evidence="2">
    <location>
        <begin position="319"/>
        <end position="331"/>
    </location>
</feature>
<feature type="compositionally biased region" description="Pro residues" evidence="2">
    <location>
        <begin position="1263"/>
        <end position="1276"/>
    </location>
</feature>
<feature type="compositionally biased region" description="Low complexity" evidence="2">
    <location>
        <begin position="1720"/>
        <end position="1743"/>
    </location>
</feature>
<feature type="compositionally biased region" description="Pro residues" evidence="2">
    <location>
        <begin position="1851"/>
        <end position="1860"/>
    </location>
</feature>
<reference key="1">
    <citation type="journal article" date="2007" name="Science">
        <title>The Chlamydomonas genome reveals the evolution of key animal and plant functions.</title>
        <authorList>
            <person name="Merchant S.S."/>
            <person name="Prochnik S.E."/>
            <person name="Vallon O."/>
            <person name="Harris E.H."/>
            <person name="Karpowicz S.J."/>
            <person name="Witman G.B."/>
            <person name="Terry A."/>
            <person name="Salamov A."/>
            <person name="Fritz-Laylin L.K."/>
            <person name="Marechal-Drouard L."/>
            <person name="Marshall W.F."/>
            <person name="Qu L.H."/>
            <person name="Nelson D.R."/>
            <person name="Sanderfoot A.A."/>
            <person name="Spalding M.H."/>
            <person name="Kapitonov V.V."/>
            <person name="Ren Q."/>
            <person name="Ferris P."/>
            <person name="Lindquist E."/>
            <person name="Shapiro H."/>
            <person name="Lucas S.M."/>
            <person name="Grimwood J."/>
            <person name="Schmutz J."/>
            <person name="Cardol P."/>
            <person name="Cerutti H."/>
            <person name="Chanfreau G."/>
            <person name="Chen C.L."/>
            <person name="Cognat V."/>
            <person name="Croft M.T."/>
            <person name="Dent R."/>
            <person name="Dutcher S."/>
            <person name="Fernandez E."/>
            <person name="Fukuzawa H."/>
            <person name="Gonzalez-Ballester D."/>
            <person name="Gonzalez-Halphen D."/>
            <person name="Hallmann A."/>
            <person name="Hanikenne M."/>
            <person name="Hippler M."/>
            <person name="Inwood W."/>
            <person name="Jabbari K."/>
            <person name="Kalanon M."/>
            <person name="Kuras R."/>
            <person name="Lefebvre P.A."/>
            <person name="Lemaire S.D."/>
            <person name="Lobanov A.V."/>
            <person name="Lohr M."/>
            <person name="Manuell A."/>
            <person name="Meier I."/>
            <person name="Mets L."/>
            <person name="Mittag M."/>
            <person name="Mittelmeier T."/>
            <person name="Moroney J.V."/>
            <person name="Moseley J."/>
            <person name="Napoli C."/>
            <person name="Nedelcu A.M."/>
            <person name="Niyogi K."/>
            <person name="Novoselov S.V."/>
            <person name="Paulsen I.T."/>
            <person name="Pazour G.J."/>
            <person name="Purton S."/>
            <person name="Ral J.P."/>
            <person name="Riano-Pachon D.M."/>
            <person name="Riekhof W."/>
            <person name="Rymarquis L."/>
            <person name="Schroda M."/>
            <person name="Stern D."/>
            <person name="Umen J."/>
            <person name="Willows R."/>
            <person name="Wilson N."/>
            <person name="Zimmer S.L."/>
            <person name="Allmer J."/>
            <person name="Balk J."/>
            <person name="Bisova K."/>
            <person name="Chen C.J."/>
            <person name="Elias M."/>
            <person name="Gendler K."/>
            <person name="Hauser C."/>
            <person name="Lamb M.R."/>
            <person name="Ledford H."/>
            <person name="Long J.C."/>
            <person name="Minagawa J."/>
            <person name="Page M.D."/>
            <person name="Pan J."/>
            <person name="Pootakham W."/>
            <person name="Roje S."/>
            <person name="Rose A."/>
            <person name="Stahlberg E."/>
            <person name="Terauchi A.M."/>
            <person name="Yang P."/>
            <person name="Ball S."/>
            <person name="Bowler C."/>
            <person name="Dieckmann C.L."/>
            <person name="Gladyshev V.N."/>
            <person name="Green P."/>
            <person name="Jorgensen R."/>
            <person name="Mayfield S."/>
            <person name="Mueller-Roeber B."/>
            <person name="Rajamani S."/>
            <person name="Sayre R.T."/>
            <person name="Brokstein P."/>
            <person name="Dubchak I."/>
            <person name="Goodstein D."/>
            <person name="Hornick L."/>
            <person name="Huang Y.W."/>
            <person name="Jhaveri J."/>
            <person name="Luo Y."/>
            <person name="Martinez D."/>
            <person name="Ngau W.C."/>
            <person name="Otillar B."/>
            <person name="Poliakov A."/>
            <person name="Porter A."/>
            <person name="Szajkowski L."/>
            <person name="Werner G."/>
            <person name="Zhou K."/>
            <person name="Grigoriev I.V."/>
            <person name="Rokhsar D.S."/>
            <person name="Grossman A.R."/>
        </authorList>
    </citation>
    <scope>NUCLEOTIDE SEQUENCE [LARGE SCALE GENOMIC DNA]</scope>
    <source>
        <strain>CC-503</strain>
        <strain>cw92</strain>
    </source>
</reference>
<reference key="2">
    <citation type="journal article" date="2017" name="Curr. Biol.">
        <title>Identification of chlamydomonas central core centriolar proteins reveals a role for human WDR90 in ciliogenesis.</title>
        <authorList>
            <person name="Hamel V."/>
            <person name="Steib E."/>
            <person name="Hamelin R."/>
            <person name="Armand F."/>
            <person name="Borgers S."/>
            <person name="Flueckiger I."/>
            <person name="Busso C."/>
            <person name="Olieric N."/>
            <person name="Sorzano C.O.S."/>
            <person name="Steinmetz M.O."/>
            <person name="Guichard P."/>
            <person name="Goenczy P."/>
        </authorList>
    </citation>
    <scope>FUNCTION</scope>
    <scope>DISRUPTION PHENOTYPE</scope>
    <scope>IDENTIFICATION BY MASS SPECTROMETRY</scope>
    <scope>SUBCELLULAR LOCATION</scope>
</reference>
<comment type="function">
    <text evidence="3">Required for flagellum assembly and/or maintenance.</text>
</comment>
<comment type="subcellular location">
    <subcellularLocation>
        <location evidence="3">Cytoplasm</location>
        <location evidence="3">Cytoskeleton</location>
        <location evidence="3">Microtubule organizing center</location>
        <location evidence="3">Centrosome</location>
        <location evidence="3">Centriole</location>
    </subcellularLocation>
</comment>
<comment type="disruption phenotype">
    <text evidence="3">Mutants display shorter flagella and cannot swim.</text>
</comment>
<comment type="similarity">
    <text evidence="5">Belongs to the WD repeat WDR90/POC16 family.</text>
</comment>
<evidence type="ECO:0000255" key="1"/>
<evidence type="ECO:0000256" key="2">
    <source>
        <dbReference type="SAM" id="MobiDB-lite"/>
    </source>
</evidence>
<evidence type="ECO:0000269" key="3">
    <source>
    </source>
</evidence>
<evidence type="ECO:0000303" key="4">
    <source>
    </source>
</evidence>
<evidence type="ECO:0000305" key="5"/>
<sequence>MSLAPEWQHPFVNIFKLCDVDTMREFETKGDVTEHIDKIIGKKVFKIRGMIPAGNYLRVPRTKLQTLGLTGRLLYIQLKVTPIKVFAIHIEVVTEDHNIHRISISNMYNPESMKRKSNGVQLPFPKPSHRWCVLAVDLREALRGYTSSPFASVKAVQTCSWMTVRTMFASDYKFSLQSLPGDMALSHALDSSLFEMVWLPAEPQDAPTMDFMPPPKRYGTRARRPGTAETADTAGAAGRKSLSGASAGGAGPAKGGAKAGAAAGGKRAVSSAGATRGTPSQRGSTAGAATPGSGAGGGGHDGEEDFEDDLSEDLDNGAPLPPSPAVPPPLSPSVAARIAGRATSANIGAATAAGAIVGAAAAHPRPGESDASARPFPRPTTALLAGAATTASLRPPIASANVAKPEPGQPAAQPLLPDPALTLTRVNAYSGEFVRCLAWLPGTDEVVFAAASVVVIMGVADPGAAAQQQAAVTPGRQRYCLGHTAFVCALAVASDGRLLASCQEGKEAIVRLWDTANCACLAILNAHASGLSCVDLSPDLRALAAVGLDVQGRQTIALWNIAELRAAGGPKVELVTRHATEYNIKVLKFSAYQEDHLLTAGRDSIRIYRLKAGQLRGTSVRLVPQDKRVTSFAGGVSAAVGPNIFTDIGFEAGVGVYGVDAFKVYVSSASGALFVVDYTTRQLDAIFQLHAAAINCLVVSDGLVLTGGDDRLLRAWPLDFRDYLLEAEHEGAVTGLAMSTDALRLAVGTENGTLGVLAIPTHAYTTLLRSHCGAVNAVAVDPNRDQYCTVSSDGTLRIWHLATHQQLYEFDAPGEAVSAIAYHPHPSHHELAAGFANGRLRVFDVPSTTLLQEHHQHRAGITELLFSPGGDRLFSGGADGALVVYDTARMYAPAQYLSAGVRDIKVCCAVSSNGAFFASLVRDPYRRTTSLLVFHGRTLDPFMRIETDAAAYVKLAFSADCNELWALTSGRRLDRYELKDGQLVQQIHEVSPLELTALCLDPAGRYAATAGADGLLRLWGCVPLPALRGLKGLPPNSAFLGHPSAILGAAFHRSGYLVTVGDADCVCVWRVNADHMQQERGHLAAAAHALRGAAAGGGAAGASPLLLQGAAHHTQATGALDPTDPRSRAHPSTALGPVASARDHQLTTRAAALGTPLPAGVLGLVPAPSAFTGTYTQGMAAPSLGSTVASPTRVTAATANSMAALSLVANSPAVAATAPGLPSHALVVPKPSPPPPSAAPASPGRSPNRALAGAGPARSRLPVPLPPSPQPLPPPPPPRCSWLLGYSPTGSSNVAWNATTGLFCYVVEDMVVMEKLATRQQRYLRGHNRPLSCLAASPDGALVAAGPAAAEPAFTEPAAGARAAQLQQQGVAVGPGGASPTAPFADVVVWEAASGRELWRLRYHPLGVQALAFSPDGRWLVSLGRDPERGVVVWDVAAGLLVAAGRTEQSPRAAAWLWGGHNPAFATAGADGLLLWTLQDNFLEQRTVPLSPTASPRDPRPVTALAVDPHGALLAAEAPAAPGSQVPVWQVQVELQPPQEPGGEAAVAPGGGGGMSAAVVQVAALPSGCVVTAMAAGLDFALLATDGGSVVRYRRSTLSGTWLESSAVRLDGRVAALSAEPNMCDAVAATDTATIWFVGMQDASCVPIVCGQAAPVTGLVPAPHSGRVMASTAADGLLRVWRLGPEDAEPALELHSTSPATAAAFLLRQPTDAPAHTLRHPPSAAPSSAASSSPLDPLDPLPAADAAPARPVLLPAPHLLGGYGDGSLRLFALEPAVQLSWALARHPAPVVGVAPHPRRGLVLSASSDGSLAVTDLSSTRLVSYITAFTAAGPTPHSPGGTGRRSPRGAASPPPAPPRPGTGPLQAMAVSSGPGAPLAALAWRDRLVVFAAPWDDPACSPLAEYDVTPSDGRTDAADSHGLLSPDVPACLAFVNSSSGSSSSGTSAASPGLSAHLGGSSSGAPSSKLLAYASPLLPGTVLLYDVRLAAVARRVRLPQMVRSLAVAPDGGAMVVGCMGRSVFLVHLASGNTEELGGHAGAVAAASYTGDGGHAVTASGSVLMVWDAAQLLKGVTPPPPRMLREF</sequence>